<evidence type="ECO:0000250" key="1">
    <source>
        <dbReference type="UniProtKB" id="P21786"/>
    </source>
</evidence>
<evidence type="ECO:0000269" key="2">
    <source>
    </source>
</evidence>
<evidence type="ECO:0000303" key="3">
    <source>
    </source>
</evidence>
<evidence type="ECO:0000305" key="4"/>
<accession>P86553</accession>
<comment type="subcellular location">
    <subcellularLocation>
        <location evidence="1">Secreted</location>
    </subcellularLocation>
</comment>
<comment type="tissue specificity">
    <text evidence="2">Expressed in the posterior region of the abdominal ventral nerve cord and in the fourth abdominal nerves (at protein level).</text>
</comment>
<comment type="mass spectrometry"/>
<proteinExistence type="evidence at protein level"/>
<name>ALLTR_ONCFA</name>
<reference evidence="4" key="1">
    <citation type="journal article" date="2009" name="Peptides">
        <title>Neuropeptides in Heteroptera: identification of allatotropin-related peptide and tachykinin-related peptides using MALDI-TOF mass spectrometry.</title>
        <authorList>
            <person name="Neupert S."/>
            <person name="Russell W.K."/>
            <person name="Russell D.H."/>
            <person name="Lopez J.D. Jr."/>
            <person name="Predel R."/>
            <person name="Nachman R.J."/>
        </authorList>
    </citation>
    <scope>PROTEIN SEQUENCE</scope>
    <scope>TISSUE SPECIFICITY</scope>
    <scope>MASS SPECTROMETRY</scope>
    <scope>AMIDATION AT PHE-13</scope>
    <source>
        <tissue evidence="2">Ventral nerve cord</tissue>
    </source>
</reference>
<organism>
    <name type="scientific">Oncopeltus fasciatus</name>
    <name type="common">Large milkweed bug</name>
    <dbReference type="NCBI Taxonomy" id="7536"/>
    <lineage>
        <taxon>Eukaryota</taxon>
        <taxon>Metazoa</taxon>
        <taxon>Ecdysozoa</taxon>
        <taxon>Arthropoda</taxon>
        <taxon>Hexapoda</taxon>
        <taxon>Insecta</taxon>
        <taxon>Pterygota</taxon>
        <taxon>Neoptera</taxon>
        <taxon>Paraneoptera</taxon>
        <taxon>Hemiptera</taxon>
        <taxon>Heteroptera</taxon>
        <taxon>Panheteroptera</taxon>
        <taxon>Pentatomomorpha</taxon>
        <taxon>Lygaeoidea</taxon>
        <taxon>Lygaeidae</taxon>
        <taxon>Lygaeinae</taxon>
        <taxon>Oncopeltus</taxon>
    </lineage>
</organism>
<sequence>GFKNVALSTARGF</sequence>
<protein>
    <recommendedName>
        <fullName evidence="3">Allatotropin-related peptide</fullName>
        <shortName evidence="3">ATRP</shortName>
    </recommendedName>
</protein>
<dbReference type="GO" id="GO:0005576">
    <property type="term" value="C:extracellular region"/>
    <property type="evidence" value="ECO:0000250"/>
    <property type="project" value="UniProtKB"/>
</dbReference>
<dbReference type="GO" id="GO:0007218">
    <property type="term" value="P:neuropeptide signaling pathway"/>
    <property type="evidence" value="ECO:0007669"/>
    <property type="project" value="UniProtKB-KW"/>
</dbReference>
<feature type="peptide" id="PRO_0000395623" description="Allatotropin-related peptide" evidence="2">
    <location>
        <begin position="1"/>
        <end position="13"/>
    </location>
</feature>
<feature type="modified residue" description="Phenylalanine amide" evidence="2">
    <location>
        <position position="13"/>
    </location>
</feature>
<keyword id="KW-0027">Amidation</keyword>
<keyword id="KW-0903">Direct protein sequencing</keyword>
<keyword id="KW-0527">Neuropeptide</keyword>
<keyword id="KW-0964">Secreted</keyword>